<proteinExistence type="inferred from homology"/>
<gene>
    <name evidence="1" type="primary">rlmE</name>
    <name evidence="1" type="synonym">ftsJ</name>
    <name evidence="1" type="synonym">rrmJ</name>
    <name type="ordered locus">Sden_0999</name>
</gene>
<sequence>MSAKKRTASSARWMQEHFDDHYVKLAQKRGLRSRAAFKLEEIQQKDHLIRQGMTVVDLGAAPGGWSQVAVKLAGDNGKVIACDILPMDPIVGVDFLQGDFREENVLNALLDRVGEDKVDVVLSDMAPNMSGSDGVDQPRAMYLVELALEMCHQVLAPNGCFAVKVFQGEGFDEYIKSVKQAFKTVKTRKPDSSRARSREVYLVATGYKL</sequence>
<dbReference type="EC" id="2.1.1.166" evidence="1"/>
<dbReference type="EMBL" id="CP000302">
    <property type="protein sequence ID" value="ABE54287.1"/>
    <property type="molecule type" value="Genomic_DNA"/>
</dbReference>
<dbReference type="RefSeq" id="WP_011495451.1">
    <property type="nucleotide sequence ID" value="NC_007954.1"/>
</dbReference>
<dbReference type="SMR" id="Q12QI9"/>
<dbReference type="STRING" id="318161.Sden_0999"/>
<dbReference type="KEGG" id="sdn:Sden_0999"/>
<dbReference type="eggNOG" id="COG0293">
    <property type="taxonomic scope" value="Bacteria"/>
</dbReference>
<dbReference type="HOGENOM" id="CLU_009422_4_0_6"/>
<dbReference type="OrthoDB" id="9790080at2"/>
<dbReference type="Proteomes" id="UP000001982">
    <property type="component" value="Chromosome"/>
</dbReference>
<dbReference type="GO" id="GO:0005737">
    <property type="term" value="C:cytoplasm"/>
    <property type="evidence" value="ECO:0007669"/>
    <property type="project" value="UniProtKB-SubCell"/>
</dbReference>
<dbReference type="GO" id="GO:0008650">
    <property type="term" value="F:rRNA (uridine-2'-O-)-methyltransferase activity"/>
    <property type="evidence" value="ECO:0007669"/>
    <property type="project" value="UniProtKB-UniRule"/>
</dbReference>
<dbReference type="FunFam" id="3.40.50.150:FF:000005">
    <property type="entry name" value="Ribosomal RNA large subunit methyltransferase E"/>
    <property type="match status" value="1"/>
</dbReference>
<dbReference type="Gene3D" id="3.40.50.150">
    <property type="entry name" value="Vaccinia Virus protein VP39"/>
    <property type="match status" value="1"/>
</dbReference>
<dbReference type="HAMAP" id="MF_01547">
    <property type="entry name" value="RNA_methyltr_E"/>
    <property type="match status" value="1"/>
</dbReference>
<dbReference type="InterPro" id="IPR050082">
    <property type="entry name" value="RNA_methyltr_RlmE"/>
</dbReference>
<dbReference type="InterPro" id="IPR002877">
    <property type="entry name" value="RNA_MeTrfase_FtsJ_dom"/>
</dbReference>
<dbReference type="InterPro" id="IPR015507">
    <property type="entry name" value="rRNA-MeTfrase_E"/>
</dbReference>
<dbReference type="InterPro" id="IPR029063">
    <property type="entry name" value="SAM-dependent_MTases_sf"/>
</dbReference>
<dbReference type="NCBIfam" id="NF008390">
    <property type="entry name" value="PRK11188.1"/>
    <property type="match status" value="1"/>
</dbReference>
<dbReference type="PANTHER" id="PTHR10920">
    <property type="entry name" value="RIBOSOMAL RNA METHYLTRANSFERASE"/>
    <property type="match status" value="1"/>
</dbReference>
<dbReference type="PANTHER" id="PTHR10920:SF18">
    <property type="entry name" value="RRNA METHYLTRANSFERASE 2, MITOCHONDRIAL"/>
    <property type="match status" value="1"/>
</dbReference>
<dbReference type="Pfam" id="PF01728">
    <property type="entry name" value="FtsJ"/>
    <property type="match status" value="1"/>
</dbReference>
<dbReference type="PIRSF" id="PIRSF005461">
    <property type="entry name" value="23S_rRNA_mtase"/>
    <property type="match status" value="1"/>
</dbReference>
<dbReference type="SUPFAM" id="SSF53335">
    <property type="entry name" value="S-adenosyl-L-methionine-dependent methyltransferases"/>
    <property type="match status" value="1"/>
</dbReference>
<keyword id="KW-0963">Cytoplasm</keyword>
<keyword id="KW-0489">Methyltransferase</keyword>
<keyword id="KW-1185">Reference proteome</keyword>
<keyword id="KW-0698">rRNA processing</keyword>
<keyword id="KW-0949">S-adenosyl-L-methionine</keyword>
<keyword id="KW-0808">Transferase</keyword>
<accession>Q12QI9</accession>
<feature type="chain" id="PRO_0000282795" description="Ribosomal RNA large subunit methyltransferase E">
    <location>
        <begin position="1"/>
        <end position="209"/>
    </location>
</feature>
<feature type="active site" description="Proton acceptor" evidence="1">
    <location>
        <position position="164"/>
    </location>
</feature>
<feature type="binding site" evidence="1">
    <location>
        <position position="63"/>
    </location>
    <ligand>
        <name>S-adenosyl-L-methionine</name>
        <dbReference type="ChEBI" id="CHEBI:59789"/>
    </ligand>
</feature>
<feature type="binding site" evidence="1">
    <location>
        <position position="65"/>
    </location>
    <ligand>
        <name>S-adenosyl-L-methionine</name>
        <dbReference type="ChEBI" id="CHEBI:59789"/>
    </ligand>
</feature>
<feature type="binding site" evidence="1">
    <location>
        <position position="83"/>
    </location>
    <ligand>
        <name>S-adenosyl-L-methionine</name>
        <dbReference type="ChEBI" id="CHEBI:59789"/>
    </ligand>
</feature>
<feature type="binding site" evidence="1">
    <location>
        <position position="99"/>
    </location>
    <ligand>
        <name>S-adenosyl-L-methionine</name>
        <dbReference type="ChEBI" id="CHEBI:59789"/>
    </ligand>
</feature>
<feature type="binding site" evidence="1">
    <location>
        <position position="124"/>
    </location>
    <ligand>
        <name>S-adenosyl-L-methionine</name>
        <dbReference type="ChEBI" id="CHEBI:59789"/>
    </ligand>
</feature>
<protein>
    <recommendedName>
        <fullName evidence="1">Ribosomal RNA large subunit methyltransferase E</fullName>
        <ecNumber evidence="1">2.1.1.166</ecNumber>
    </recommendedName>
    <alternativeName>
        <fullName evidence="1">23S rRNA Um2552 methyltransferase</fullName>
    </alternativeName>
    <alternativeName>
        <fullName evidence="1">rRNA (uridine-2'-O-)-methyltransferase</fullName>
    </alternativeName>
</protein>
<organism>
    <name type="scientific">Shewanella denitrificans (strain OS217 / ATCC BAA-1090 / DSM 15013)</name>
    <dbReference type="NCBI Taxonomy" id="318161"/>
    <lineage>
        <taxon>Bacteria</taxon>
        <taxon>Pseudomonadati</taxon>
        <taxon>Pseudomonadota</taxon>
        <taxon>Gammaproteobacteria</taxon>
        <taxon>Alteromonadales</taxon>
        <taxon>Shewanellaceae</taxon>
        <taxon>Shewanella</taxon>
    </lineage>
</organism>
<evidence type="ECO:0000255" key="1">
    <source>
        <dbReference type="HAMAP-Rule" id="MF_01547"/>
    </source>
</evidence>
<name>RLME_SHEDO</name>
<comment type="function">
    <text evidence="1">Specifically methylates the uridine in position 2552 of 23S rRNA at the 2'-O position of the ribose in the fully assembled 50S ribosomal subunit.</text>
</comment>
<comment type="catalytic activity">
    <reaction evidence="1">
        <text>uridine(2552) in 23S rRNA + S-adenosyl-L-methionine = 2'-O-methyluridine(2552) in 23S rRNA + S-adenosyl-L-homocysteine + H(+)</text>
        <dbReference type="Rhea" id="RHEA:42720"/>
        <dbReference type="Rhea" id="RHEA-COMP:10202"/>
        <dbReference type="Rhea" id="RHEA-COMP:10203"/>
        <dbReference type="ChEBI" id="CHEBI:15378"/>
        <dbReference type="ChEBI" id="CHEBI:57856"/>
        <dbReference type="ChEBI" id="CHEBI:59789"/>
        <dbReference type="ChEBI" id="CHEBI:65315"/>
        <dbReference type="ChEBI" id="CHEBI:74478"/>
        <dbReference type="EC" id="2.1.1.166"/>
    </reaction>
</comment>
<comment type="subcellular location">
    <subcellularLocation>
        <location evidence="1">Cytoplasm</location>
    </subcellularLocation>
</comment>
<comment type="similarity">
    <text evidence="1">Belongs to the class I-like SAM-binding methyltransferase superfamily. RNA methyltransferase RlmE family.</text>
</comment>
<reference key="1">
    <citation type="submission" date="2006-03" db="EMBL/GenBank/DDBJ databases">
        <title>Complete sequence of Shewanella denitrificans OS217.</title>
        <authorList>
            <consortium name="US DOE Joint Genome Institute"/>
            <person name="Copeland A."/>
            <person name="Lucas S."/>
            <person name="Lapidus A."/>
            <person name="Barry K."/>
            <person name="Detter J.C."/>
            <person name="Glavina del Rio T."/>
            <person name="Hammon N."/>
            <person name="Israni S."/>
            <person name="Dalin E."/>
            <person name="Tice H."/>
            <person name="Pitluck S."/>
            <person name="Brettin T."/>
            <person name="Bruce D."/>
            <person name="Han C."/>
            <person name="Tapia R."/>
            <person name="Gilna P."/>
            <person name="Kiss H."/>
            <person name="Schmutz J."/>
            <person name="Larimer F."/>
            <person name="Land M."/>
            <person name="Hauser L."/>
            <person name="Kyrpides N."/>
            <person name="Lykidis A."/>
            <person name="Richardson P."/>
        </authorList>
    </citation>
    <scope>NUCLEOTIDE SEQUENCE [LARGE SCALE GENOMIC DNA]</scope>
    <source>
        <strain>OS217 / ATCC BAA-1090 / DSM 15013</strain>
    </source>
</reference>